<organism>
    <name type="scientific">Burkholderia cenocepacia (strain HI2424)</name>
    <dbReference type="NCBI Taxonomy" id="331272"/>
    <lineage>
        <taxon>Bacteria</taxon>
        <taxon>Pseudomonadati</taxon>
        <taxon>Pseudomonadota</taxon>
        <taxon>Betaproteobacteria</taxon>
        <taxon>Burkholderiales</taxon>
        <taxon>Burkholderiaceae</taxon>
        <taxon>Burkholderia</taxon>
        <taxon>Burkholderia cepacia complex</taxon>
    </lineage>
</organism>
<proteinExistence type="inferred from homology"/>
<evidence type="ECO:0000255" key="1">
    <source>
        <dbReference type="HAMAP-Rule" id="MF_01358"/>
    </source>
</evidence>
<name>NUOD_BURCH</name>
<protein>
    <recommendedName>
        <fullName evidence="1">NADH-quinone oxidoreductase subunit D</fullName>
        <ecNumber evidence="1">7.1.1.-</ecNumber>
    </recommendedName>
    <alternativeName>
        <fullName evidence="1">NADH dehydrogenase I subunit D</fullName>
    </alternativeName>
    <alternativeName>
        <fullName evidence="1">NDH-1 subunit D</fullName>
    </alternativeName>
</protein>
<comment type="function">
    <text evidence="1">NDH-1 shuttles electrons from NADH, via FMN and iron-sulfur (Fe-S) centers, to quinones in the respiratory chain. The immediate electron acceptor for the enzyme in this species is believed to be ubiquinone. Couples the redox reaction to proton translocation (for every two electrons transferred, four hydrogen ions are translocated across the cytoplasmic membrane), and thus conserves the redox energy in a proton gradient.</text>
</comment>
<comment type="catalytic activity">
    <reaction evidence="1">
        <text>a quinone + NADH + 5 H(+)(in) = a quinol + NAD(+) + 4 H(+)(out)</text>
        <dbReference type="Rhea" id="RHEA:57888"/>
        <dbReference type="ChEBI" id="CHEBI:15378"/>
        <dbReference type="ChEBI" id="CHEBI:24646"/>
        <dbReference type="ChEBI" id="CHEBI:57540"/>
        <dbReference type="ChEBI" id="CHEBI:57945"/>
        <dbReference type="ChEBI" id="CHEBI:132124"/>
    </reaction>
</comment>
<comment type="subunit">
    <text evidence="1">NDH-1 is composed of 14 different subunits. Subunits NuoB, C, D, E, F, and G constitute the peripheral sector of the complex.</text>
</comment>
<comment type="subcellular location">
    <subcellularLocation>
        <location evidence="1">Cell inner membrane</location>
        <topology evidence="1">Peripheral membrane protein</topology>
        <orientation evidence="1">Cytoplasmic side</orientation>
    </subcellularLocation>
</comment>
<comment type="similarity">
    <text evidence="1">Belongs to the complex I 49 kDa subunit family.</text>
</comment>
<gene>
    <name evidence="1" type="primary">nuoD</name>
    <name type="ordered locus">Bcen2424_2246</name>
</gene>
<keyword id="KW-0997">Cell inner membrane</keyword>
<keyword id="KW-1003">Cell membrane</keyword>
<keyword id="KW-0472">Membrane</keyword>
<keyword id="KW-0520">NAD</keyword>
<keyword id="KW-0874">Quinone</keyword>
<keyword id="KW-1278">Translocase</keyword>
<keyword id="KW-0813">Transport</keyword>
<keyword id="KW-0830">Ubiquinone</keyword>
<dbReference type="EC" id="7.1.1.-" evidence="1"/>
<dbReference type="EMBL" id="CP000458">
    <property type="protein sequence ID" value="ABK08997.1"/>
    <property type="molecule type" value="Genomic_DNA"/>
</dbReference>
<dbReference type="RefSeq" id="WP_006478265.1">
    <property type="nucleotide sequence ID" value="NC_008542.1"/>
</dbReference>
<dbReference type="SMR" id="A0K920"/>
<dbReference type="KEGG" id="bch:Bcen2424_2246"/>
<dbReference type="HOGENOM" id="CLU_015134_1_1_4"/>
<dbReference type="GO" id="GO:0005886">
    <property type="term" value="C:plasma membrane"/>
    <property type="evidence" value="ECO:0007669"/>
    <property type="project" value="UniProtKB-SubCell"/>
</dbReference>
<dbReference type="GO" id="GO:0051287">
    <property type="term" value="F:NAD binding"/>
    <property type="evidence" value="ECO:0007669"/>
    <property type="project" value="InterPro"/>
</dbReference>
<dbReference type="GO" id="GO:0050136">
    <property type="term" value="F:NADH:ubiquinone reductase (non-electrogenic) activity"/>
    <property type="evidence" value="ECO:0007669"/>
    <property type="project" value="UniProtKB-UniRule"/>
</dbReference>
<dbReference type="GO" id="GO:0048038">
    <property type="term" value="F:quinone binding"/>
    <property type="evidence" value="ECO:0007669"/>
    <property type="project" value="UniProtKB-KW"/>
</dbReference>
<dbReference type="FunFam" id="1.10.645.10:FF:000005">
    <property type="entry name" value="NADH-quinone oxidoreductase subunit D"/>
    <property type="match status" value="1"/>
</dbReference>
<dbReference type="Gene3D" id="1.10.645.10">
    <property type="entry name" value="Cytochrome-c3 Hydrogenase, chain B"/>
    <property type="match status" value="1"/>
</dbReference>
<dbReference type="HAMAP" id="MF_01358">
    <property type="entry name" value="NDH1_NuoD"/>
    <property type="match status" value="1"/>
</dbReference>
<dbReference type="InterPro" id="IPR001135">
    <property type="entry name" value="NADH_Q_OxRdtase_suD"/>
</dbReference>
<dbReference type="InterPro" id="IPR014029">
    <property type="entry name" value="NADH_UbQ_OxRdtase_49kDa_CS"/>
</dbReference>
<dbReference type="InterPro" id="IPR022885">
    <property type="entry name" value="NDH1_su_D/H"/>
</dbReference>
<dbReference type="InterPro" id="IPR029014">
    <property type="entry name" value="NiFe-Hase_large"/>
</dbReference>
<dbReference type="NCBIfam" id="TIGR01962">
    <property type="entry name" value="NuoD"/>
    <property type="match status" value="1"/>
</dbReference>
<dbReference type="NCBIfam" id="NF004739">
    <property type="entry name" value="PRK06075.1"/>
    <property type="match status" value="1"/>
</dbReference>
<dbReference type="PANTHER" id="PTHR11993:SF10">
    <property type="entry name" value="NADH DEHYDROGENASE [UBIQUINONE] IRON-SULFUR PROTEIN 2, MITOCHONDRIAL"/>
    <property type="match status" value="1"/>
</dbReference>
<dbReference type="PANTHER" id="PTHR11993">
    <property type="entry name" value="NADH-UBIQUINONE OXIDOREDUCTASE 49 KDA SUBUNIT"/>
    <property type="match status" value="1"/>
</dbReference>
<dbReference type="Pfam" id="PF00346">
    <property type="entry name" value="Complex1_49kDa"/>
    <property type="match status" value="1"/>
</dbReference>
<dbReference type="SUPFAM" id="SSF56762">
    <property type="entry name" value="HydB/Nqo4-like"/>
    <property type="match status" value="1"/>
</dbReference>
<dbReference type="PROSITE" id="PS00535">
    <property type="entry name" value="COMPLEX1_49K"/>
    <property type="match status" value="1"/>
</dbReference>
<accession>A0K920</accession>
<reference key="1">
    <citation type="submission" date="2006-08" db="EMBL/GenBank/DDBJ databases">
        <title>Complete sequence of chromosome 1 of Burkholderia cenocepacia HI2424.</title>
        <authorList>
            <person name="Copeland A."/>
            <person name="Lucas S."/>
            <person name="Lapidus A."/>
            <person name="Barry K."/>
            <person name="Detter J.C."/>
            <person name="Glavina del Rio T."/>
            <person name="Hammon N."/>
            <person name="Israni S."/>
            <person name="Pitluck S."/>
            <person name="Chain P."/>
            <person name="Malfatti S."/>
            <person name="Shin M."/>
            <person name="Vergez L."/>
            <person name="Schmutz J."/>
            <person name="Larimer F."/>
            <person name="Land M."/>
            <person name="Hauser L."/>
            <person name="Kyrpides N."/>
            <person name="Kim E."/>
            <person name="LiPuma J.J."/>
            <person name="Gonzalez C.F."/>
            <person name="Konstantinidis K."/>
            <person name="Tiedje J.M."/>
            <person name="Richardson P."/>
        </authorList>
    </citation>
    <scope>NUCLEOTIDE SEQUENCE [LARGE SCALE GENOMIC DNA]</scope>
    <source>
        <strain>HI2424</strain>
    </source>
</reference>
<sequence length="417" mass="47444">MAEIKNYTLNFGPQHPAAHGVLRLVLELDGEVIQRADPHIGLLHRATEKLAESKTFIQSVPYMDRLDYVSMMVNEHGYVLAIEKLLGIEVPERAQYIRVLFDEITRVLNHLMWIGAHALDVGAMAVFLYAFREREDLMDVYEAVSGARMHAAYYRPGGVYRDLPDAMPQYKASKIRNEKALAKMNEARSGSVLDFIDDFFTRFPKCVDEYETLLTDNRIWKQRLVGIGVVSPERALQMGLTGPMLRGSGIAWDLRKKQPYEVYDRMDFDVPVGVNGDCYDRYLVRVEEMRQSIRIAKQCIEWLRKNPGPVMTDNHKVAPPSRVGMKTNMEDLIHHFKLFTEGFHVPEGEAYAAVEHPKGEFGIYLVSDGANKPYRLKIRAPGFAHLASLDEMARGHMIADAVTIIGTQDIVFGEIDR</sequence>
<feature type="chain" id="PRO_0000371825" description="NADH-quinone oxidoreductase subunit D">
    <location>
        <begin position="1"/>
        <end position="417"/>
    </location>
</feature>